<keyword id="KW-0067">ATP-binding</keyword>
<keyword id="KW-0414">Isoprene biosynthesis</keyword>
<keyword id="KW-0418">Kinase</keyword>
<keyword id="KW-0547">Nucleotide-binding</keyword>
<keyword id="KW-1185">Reference proteome</keyword>
<keyword id="KW-0808">Transferase</keyword>
<reference key="1">
    <citation type="journal article" date="2010" name="BMC Genomics">
        <title>A genomic perspective on the potential of Actinobacillus succinogenes for industrial succinate production.</title>
        <authorList>
            <person name="McKinlay J.B."/>
            <person name="Laivenieks M."/>
            <person name="Schindler B.D."/>
            <person name="McKinlay A.A."/>
            <person name="Siddaramappa S."/>
            <person name="Challacombe J.F."/>
            <person name="Lowry S.R."/>
            <person name="Clum A."/>
            <person name="Lapidus A.L."/>
            <person name="Burkhart K.B."/>
            <person name="Harkins V."/>
            <person name="Vieille C."/>
        </authorList>
    </citation>
    <scope>NUCLEOTIDE SEQUENCE [LARGE SCALE GENOMIC DNA]</scope>
    <source>
        <strain>ATCC 55618 / DSM 22257 / CCUG 43843 / 130Z</strain>
    </source>
</reference>
<organism>
    <name type="scientific">Actinobacillus succinogenes (strain ATCC 55618 / DSM 22257 / CCUG 43843 / 130Z)</name>
    <dbReference type="NCBI Taxonomy" id="339671"/>
    <lineage>
        <taxon>Bacteria</taxon>
        <taxon>Pseudomonadati</taxon>
        <taxon>Pseudomonadota</taxon>
        <taxon>Gammaproteobacteria</taxon>
        <taxon>Pasteurellales</taxon>
        <taxon>Pasteurellaceae</taxon>
        <taxon>Actinobacillus</taxon>
    </lineage>
</organism>
<comment type="function">
    <text evidence="1">Catalyzes the phosphorylation of the position 2 hydroxy group of 4-diphosphocytidyl-2C-methyl-D-erythritol.</text>
</comment>
<comment type="catalytic activity">
    <reaction evidence="1">
        <text>4-CDP-2-C-methyl-D-erythritol + ATP = 4-CDP-2-C-methyl-D-erythritol 2-phosphate + ADP + H(+)</text>
        <dbReference type="Rhea" id="RHEA:18437"/>
        <dbReference type="ChEBI" id="CHEBI:15378"/>
        <dbReference type="ChEBI" id="CHEBI:30616"/>
        <dbReference type="ChEBI" id="CHEBI:57823"/>
        <dbReference type="ChEBI" id="CHEBI:57919"/>
        <dbReference type="ChEBI" id="CHEBI:456216"/>
        <dbReference type="EC" id="2.7.1.148"/>
    </reaction>
</comment>
<comment type="pathway">
    <text evidence="1">Isoprenoid biosynthesis; isopentenyl diphosphate biosynthesis via DXP pathway; isopentenyl diphosphate from 1-deoxy-D-xylulose 5-phosphate: step 3/6.</text>
</comment>
<comment type="similarity">
    <text evidence="1">Belongs to the GHMP kinase family. IspE subfamily.</text>
</comment>
<name>ISPE_ACTSZ</name>
<proteinExistence type="inferred from homology"/>
<accession>A6VQ56</accession>
<sequence length="302" mass="33402">MKKNYRFSTALSQFSADSFRQGKSLRFPSPAKLNLFLYINGKRADGYHELQTLFQFLDYGDWLEISARADGEIHLTPQLPGVKEEDNLIYRAAHILQQNTGCTLGADIRLDKILPMGGGVGGGSSNAATVLVALNYLWKTRLSLSELADLGVKLGADVPIFIHGNAAFAEGVGEKLTDCEPPEKWFVVLKPETSISTALVFTHPDLPRNTPKRPLTRLLTEEYGNDCEKVVRNCYPEVEETLTWLLKYAPSRLTGTGACVFAEFDNEKSAQAVFDMKPASVSGFVAKGCNRSPLHQWLDKIS</sequence>
<dbReference type="EC" id="2.7.1.148" evidence="1"/>
<dbReference type="EMBL" id="CP000746">
    <property type="protein sequence ID" value="ABR75103.1"/>
    <property type="molecule type" value="Genomic_DNA"/>
</dbReference>
<dbReference type="RefSeq" id="WP_012073480.1">
    <property type="nucleotide sequence ID" value="NC_009655.1"/>
</dbReference>
<dbReference type="SMR" id="A6VQ56"/>
<dbReference type="STRING" id="339671.Asuc_1751"/>
<dbReference type="KEGG" id="asu:Asuc_1751"/>
<dbReference type="eggNOG" id="COG1947">
    <property type="taxonomic scope" value="Bacteria"/>
</dbReference>
<dbReference type="HOGENOM" id="CLU_053057_3_0_6"/>
<dbReference type="OrthoDB" id="9809438at2"/>
<dbReference type="UniPathway" id="UPA00056">
    <property type="reaction ID" value="UER00094"/>
</dbReference>
<dbReference type="Proteomes" id="UP000001114">
    <property type="component" value="Chromosome"/>
</dbReference>
<dbReference type="GO" id="GO:0050515">
    <property type="term" value="F:4-(cytidine 5'-diphospho)-2-C-methyl-D-erythritol kinase activity"/>
    <property type="evidence" value="ECO:0007669"/>
    <property type="project" value="UniProtKB-UniRule"/>
</dbReference>
<dbReference type="GO" id="GO:0005524">
    <property type="term" value="F:ATP binding"/>
    <property type="evidence" value="ECO:0007669"/>
    <property type="project" value="UniProtKB-UniRule"/>
</dbReference>
<dbReference type="GO" id="GO:0019288">
    <property type="term" value="P:isopentenyl diphosphate biosynthetic process, methylerythritol 4-phosphate pathway"/>
    <property type="evidence" value="ECO:0007669"/>
    <property type="project" value="UniProtKB-UniRule"/>
</dbReference>
<dbReference type="GO" id="GO:0016114">
    <property type="term" value="P:terpenoid biosynthetic process"/>
    <property type="evidence" value="ECO:0007669"/>
    <property type="project" value="InterPro"/>
</dbReference>
<dbReference type="FunFam" id="3.30.230.10:FF:000022">
    <property type="entry name" value="4-diphosphocytidyl-2-C-methyl-D-erythritol kinase"/>
    <property type="match status" value="1"/>
</dbReference>
<dbReference type="Gene3D" id="3.30.230.10">
    <property type="match status" value="1"/>
</dbReference>
<dbReference type="Gene3D" id="3.30.70.890">
    <property type="entry name" value="GHMP kinase, C-terminal domain"/>
    <property type="match status" value="1"/>
</dbReference>
<dbReference type="HAMAP" id="MF_00061">
    <property type="entry name" value="IspE"/>
    <property type="match status" value="1"/>
</dbReference>
<dbReference type="InterPro" id="IPR013750">
    <property type="entry name" value="GHMP_kinase_C_dom"/>
</dbReference>
<dbReference type="InterPro" id="IPR036554">
    <property type="entry name" value="GHMP_kinase_C_sf"/>
</dbReference>
<dbReference type="InterPro" id="IPR006204">
    <property type="entry name" value="GHMP_kinase_N_dom"/>
</dbReference>
<dbReference type="InterPro" id="IPR004424">
    <property type="entry name" value="IspE"/>
</dbReference>
<dbReference type="InterPro" id="IPR020568">
    <property type="entry name" value="Ribosomal_Su5_D2-typ_SF"/>
</dbReference>
<dbReference type="InterPro" id="IPR014721">
    <property type="entry name" value="Ribsml_uS5_D2-typ_fold_subgr"/>
</dbReference>
<dbReference type="NCBIfam" id="TIGR00154">
    <property type="entry name" value="ispE"/>
    <property type="match status" value="1"/>
</dbReference>
<dbReference type="PANTHER" id="PTHR43527">
    <property type="entry name" value="4-DIPHOSPHOCYTIDYL-2-C-METHYL-D-ERYTHRITOL KINASE, CHLOROPLASTIC"/>
    <property type="match status" value="1"/>
</dbReference>
<dbReference type="PANTHER" id="PTHR43527:SF2">
    <property type="entry name" value="4-DIPHOSPHOCYTIDYL-2-C-METHYL-D-ERYTHRITOL KINASE, CHLOROPLASTIC"/>
    <property type="match status" value="1"/>
</dbReference>
<dbReference type="Pfam" id="PF08544">
    <property type="entry name" value="GHMP_kinases_C"/>
    <property type="match status" value="1"/>
</dbReference>
<dbReference type="Pfam" id="PF00288">
    <property type="entry name" value="GHMP_kinases_N"/>
    <property type="match status" value="1"/>
</dbReference>
<dbReference type="PIRSF" id="PIRSF010376">
    <property type="entry name" value="IspE"/>
    <property type="match status" value="1"/>
</dbReference>
<dbReference type="SUPFAM" id="SSF55060">
    <property type="entry name" value="GHMP Kinase, C-terminal domain"/>
    <property type="match status" value="1"/>
</dbReference>
<dbReference type="SUPFAM" id="SSF54211">
    <property type="entry name" value="Ribosomal protein S5 domain 2-like"/>
    <property type="match status" value="1"/>
</dbReference>
<feature type="chain" id="PRO_0000335695" description="4-diphosphocytidyl-2-C-methyl-D-erythritol kinase">
    <location>
        <begin position="1"/>
        <end position="302"/>
    </location>
</feature>
<feature type="active site" evidence="1">
    <location>
        <position position="32"/>
    </location>
</feature>
<feature type="active site" evidence="1">
    <location>
        <position position="157"/>
    </location>
</feature>
<feature type="binding site" evidence="1">
    <location>
        <begin position="115"/>
        <end position="125"/>
    </location>
    <ligand>
        <name>ATP</name>
        <dbReference type="ChEBI" id="CHEBI:30616"/>
    </ligand>
</feature>
<gene>
    <name evidence="1" type="primary">ispE</name>
    <name type="ordered locus">Asuc_1751</name>
</gene>
<evidence type="ECO:0000255" key="1">
    <source>
        <dbReference type="HAMAP-Rule" id="MF_00061"/>
    </source>
</evidence>
<protein>
    <recommendedName>
        <fullName evidence="1">4-diphosphocytidyl-2-C-methyl-D-erythritol kinase</fullName>
        <shortName evidence="1">CMK</shortName>
        <ecNumber evidence="1">2.7.1.148</ecNumber>
    </recommendedName>
    <alternativeName>
        <fullName evidence="1">4-(cytidine-5'-diphospho)-2-C-methyl-D-erythritol kinase</fullName>
    </alternativeName>
</protein>